<reference key="1">
    <citation type="journal article" date="2005" name="J. Bacteriol.">
        <title>Insights on evolution of virulence and resistance from the complete genome analysis of an early methicillin-resistant Staphylococcus aureus strain and a biofilm-producing methicillin-resistant Staphylococcus epidermidis strain.</title>
        <authorList>
            <person name="Gill S.R."/>
            <person name="Fouts D.E."/>
            <person name="Archer G.L."/>
            <person name="Mongodin E.F."/>
            <person name="DeBoy R.T."/>
            <person name="Ravel J."/>
            <person name="Paulsen I.T."/>
            <person name="Kolonay J.F."/>
            <person name="Brinkac L.M."/>
            <person name="Beanan M.J."/>
            <person name="Dodson R.J."/>
            <person name="Daugherty S.C."/>
            <person name="Madupu R."/>
            <person name="Angiuoli S.V."/>
            <person name="Durkin A.S."/>
            <person name="Haft D.H."/>
            <person name="Vamathevan J.J."/>
            <person name="Khouri H."/>
            <person name="Utterback T.R."/>
            <person name="Lee C."/>
            <person name="Dimitrov G."/>
            <person name="Jiang L."/>
            <person name="Qin H."/>
            <person name="Weidman J."/>
            <person name="Tran K."/>
            <person name="Kang K.H."/>
            <person name="Hance I.R."/>
            <person name="Nelson K.E."/>
            <person name="Fraser C.M."/>
        </authorList>
    </citation>
    <scope>NUCLEOTIDE SEQUENCE [LARGE SCALE GENOMIC DNA]</scope>
    <source>
        <strain>ATCC 35984 / DSM 28319 / BCRC 17069 / CCUG 31568 / BM 3577 / RP62A</strain>
    </source>
</reference>
<dbReference type="EC" id="3.4.22.-"/>
<dbReference type="EMBL" id="CP000029">
    <property type="protein sequence ID" value="AAW53223.1"/>
    <property type="molecule type" value="Genomic_DNA"/>
</dbReference>
<dbReference type="RefSeq" id="WP_002437704.1">
    <property type="nucleotide sequence ID" value="NC_002976.3"/>
</dbReference>
<dbReference type="SMR" id="Q5HKF6"/>
<dbReference type="STRING" id="176279.SERP2390"/>
<dbReference type="MEROPS" id="C47.003"/>
<dbReference type="KEGG" id="ser:SERP2390"/>
<dbReference type="eggNOG" id="ENOG502ZWEC">
    <property type="taxonomic scope" value="Bacteria"/>
</dbReference>
<dbReference type="HOGENOM" id="CLU_069043_0_0_9"/>
<dbReference type="Proteomes" id="UP000000531">
    <property type="component" value="Chromosome"/>
</dbReference>
<dbReference type="GO" id="GO:0005576">
    <property type="term" value="C:extracellular region"/>
    <property type="evidence" value="ECO:0007669"/>
    <property type="project" value="UniProtKB-SubCell"/>
</dbReference>
<dbReference type="GO" id="GO:0008234">
    <property type="term" value="F:cysteine-type peptidase activity"/>
    <property type="evidence" value="ECO:0007669"/>
    <property type="project" value="UniProtKB-KW"/>
</dbReference>
<dbReference type="GO" id="GO:0006508">
    <property type="term" value="P:proteolysis"/>
    <property type="evidence" value="ECO:0007669"/>
    <property type="project" value="UniProtKB-KW"/>
</dbReference>
<dbReference type="Gene3D" id="3.90.70.10">
    <property type="entry name" value="Cysteine proteinases"/>
    <property type="match status" value="1"/>
</dbReference>
<dbReference type="Gene3D" id="3.10.500.10">
    <property type="entry name" value="Staphopain proregion domain"/>
    <property type="match status" value="1"/>
</dbReference>
<dbReference type="InterPro" id="IPR046350">
    <property type="entry name" value="Cystatin_sf"/>
</dbReference>
<dbReference type="InterPro" id="IPR038765">
    <property type="entry name" value="Papain-like_cys_pep_sf"/>
</dbReference>
<dbReference type="InterPro" id="IPR025660">
    <property type="entry name" value="Pept_his_AS"/>
</dbReference>
<dbReference type="InterPro" id="IPR008750">
    <property type="entry name" value="Peptidase_C47"/>
</dbReference>
<dbReference type="InterPro" id="IPR028076">
    <property type="entry name" value="Staphopain_pro"/>
</dbReference>
<dbReference type="InterPro" id="IPR037155">
    <property type="entry name" value="Staphopain_pro_sf"/>
</dbReference>
<dbReference type="Pfam" id="PF05543">
    <property type="entry name" value="Peptidase_C47"/>
    <property type="match status" value="1"/>
</dbReference>
<dbReference type="Pfam" id="PF14731">
    <property type="entry name" value="Staphopain_pro"/>
    <property type="match status" value="1"/>
</dbReference>
<dbReference type="SUPFAM" id="SSF54403">
    <property type="entry name" value="Cystatin/monellin"/>
    <property type="match status" value="1"/>
</dbReference>
<dbReference type="SUPFAM" id="SSF54001">
    <property type="entry name" value="Cysteine proteinases"/>
    <property type="match status" value="1"/>
</dbReference>
<dbReference type="PROSITE" id="PS00639">
    <property type="entry name" value="THIOL_PROTEASE_HIS"/>
    <property type="match status" value="1"/>
</dbReference>
<evidence type="ECO:0000250" key="1"/>
<evidence type="ECO:0000255" key="2"/>
<evidence type="ECO:0000255" key="3">
    <source>
        <dbReference type="PROSITE-ProRule" id="PRU10089"/>
    </source>
</evidence>
<evidence type="ECO:0000305" key="4"/>
<keyword id="KW-0134">Cell wall</keyword>
<keyword id="KW-0378">Hydrolase</keyword>
<keyword id="KW-0645">Protease</keyword>
<keyword id="KW-1185">Reference proteome</keyword>
<keyword id="KW-0964">Secreted</keyword>
<keyword id="KW-0732">Signal</keyword>
<keyword id="KW-0788">Thiol protease</keyword>
<keyword id="KW-0843">Virulence</keyword>
<keyword id="KW-0865">Zymogen</keyword>
<proteinExistence type="inferred from homology"/>
<accession>Q5HKF6</accession>
<name>ECPA_STAEQ</name>
<comment type="function">
    <text evidence="1">Cysteine protease able to cleave elastin, insulin, myoglobin, fibronectin, fibrinogen, HMW-kininogen, alpha-1-protease inhibitor and alpha-1-antitrypsin. Along with other extracellular proteases may contribute to the colonization and infection of human tissues (By similarity).</text>
</comment>
<comment type="subcellular location">
    <subcellularLocation>
        <location>Secreted</location>
        <location>Cell wall</location>
    </subcellularLocation>
    <subcellularLocation>
        <location evidence="1">Secreted</location>
    </subcellularLocation>
</comment>
<comment type="PTM">
    <text evidence="1">Proteolytically cleaved.</text>
</comment>
<comment type="similarity">
    <text evidence="4">Belongs to the peptidase C47 family.</text>
</comment>
<protein>
    <recommendedName>
        <fullName>Extracellular cysteine protease</fullName>
        <ecNumber>3.4.22.-</ecNumber>
    </recommendedName>
    <alternativeName>
        <fullName>Staphopain</fullName>
    </alternativeName>
</protein>
<feature type="signal peptide" evidence="2">
    <location>
        <begin position="1"/>
        <end position="30"/>
    </location>
</feature>
<feature type="propeptide" id="PRO_0000026575" evidence="1">
    <location>
        <begin position="31"/>
        <end position="221"/>
    </location>
</feature>
<feature type="chain" id="PRO_0000026576" description="Extracellular cysteine protease">
    <location>
        <begin position="222"/>
        <end position="395"/>
    </location>
</feature>
<feature type="active site" evidence="3">
    <location>
        <position position="245"/>
    </location>
</feature>
<feature type="active site" evidence="3">
    <location>
        <position position="341"/>
    </location>
</feature>
<feature type="active site" evidence="3">
    <location>
        <position position="362"/>
    </location>
</feature>
<feature type="site" description="Cleavage" evidence="1">
    <location>
        <begin position="221"/>
        <end position="222"/>
    </location>
</feature>
<sequence>MKKKLSYMITIMLAFTLSLALGLFFNSAHADSLPQKNGANQKTTKVTVSNKDVPDAVRKLAEEQYLSRVALLDKASNHKATSYTLGEPFKIYKFNKESDGNYYYPVLNKKGDVVYVVTISPNPSNSKASKQQNNYSINVSPFLSKILNQYKNQKITILTNTKGYFALTEDGKVTLVLKTPRNNEKTYENATESTKPKDLNDFKQTASVTKPTLEYQSTRNEMYAEYVNQLKNFRIRETQGYNSWCAGYTMSALLNATYNTNRYNAESVMRYLHPNLRGHDFQFTGLTSNEMLRFGRSQGRNTQYLNRMTSYNEVDQLTTNNQGIAVLGKRVESSDGIHAGHAMAVAGNAKVNNGQKVILIWNPWDNGLMTQDAHSNIIPVSNGDHYEWYASIYGY</sequence>
<gene>
    <name type="primary">ecpA</name>
    <name type="synonym">ecp</name>
    <name type="ordered locus">SERP2390</name>
</gene>
<organism>
    <name type="scientific">Staphylococcus epidermidis (strain ATCC 35984 / DSM 28319 / BCRC 17069 / CCUG 31568 / BM 3577 / RP62A)</name>
    <dbReference type="NCBI Taxonomy" id="176279"/>
    <lineage>
        <taxon>Bacteria</taxon>
        <taxon>Bacillati</taxon>
        <taxon>Bacillota</taxon>
        <taxon>Bacilli</taxon>
        <taxon>Bacillales</taxon>
        <taxon>Staphylococcaceae</taxon>
        <taxon>Staphylococcus</taxon>
    </lineage>
</organism>